<name>RBS_PYLLI</name>
<gene>
    <name evidence="1" type="primary">rbcS</name>
</gene>
<organism>
    <name type="scientific">Pylaiella littoralis</name>
    <name type="common">Seaweed</name>
    <name type="synonym">Conferva littoralis</name>
    <dbReference type="NCBI Taxonomy" id="2885"/>
    <lineage>
        <taxon>Eukaryota</taxon>
        <taxon>Sar</taxon>
        <taxon>Stramenopiles</taxon>
        <taxon>Ochrophyta</taxon>
        <taxon>PX clade</taxon>
        <taxon>Phaeophyceae</taxon>
        <taxon>Ectocarpales</taxon>
        <taxon>Acinetosporaceae</taxon>
        <taxon>Pylaiella</taxon>
    </lineage>
</organism>
<proteinExistence type="inferred from homology"/>
<keyword id="KW-0113">Calvin cycle</keyword>
<keyword id="KW-0120">Carbon dioxide fixation</keyword>
<keyword id="KW-0150">Chloroplast</keyword>
<keyword id="KW-0601">Photorespiration</keyword>
<keyword id="KW-0602">Photosynthesis</keyword>
<keyword id="KW-0934">Plastid</keyword>
<accession>P23652</accession>
<protein>
    <recommendedName>
        <fullName evidence="1">Ribulose bisphosphate carboxylase small subunit</fullName>
        <shortName evidence="1">RuBisCO small subunit</shortName>
    </recommendedName>
</protein>
<geneLocation type="chloroplast"/>
<reference key="1">
    <citation type="journal article" date="1990" name="Plant Mol. Biol.">
        <title>Evidence for a composite phylogenetic origin of the plastid genome of the brown alga Pylaiella littoralis (L.) Kjellm.</title>
        <authorList>
            <person name="Assali N.E."/>
            <person name="Mache R."/>
            <person name="Loiseaux-De Goer S."/>
        </authorList>
    </citation>
    <scope>NUCLEOTIDE SEQUENCE [GENOMIC DNA]</scope>
</reference>
<reference key="2">
    <citation type="journal article" date="1991" name="Plant Mol. Biol.">
        <title>Evolution of the Rubisco operon from prokaryotes to algae: structure and analysis of the rbcS gene of the brown alga Pylaiella littoralis.</title>
        <authorList>
            <person name="Assali N.E."/>
            <person name="Martin W.F."/>
            <person name="Sommerville C.C."/>
            <person name="Loiseaux-De Goer S."/>
        </authorList>
    </citation>
    <scope>NUCLEOTIDE SEQUENCE [GENOMIC DNA]</scope>
</reference>
<sequence>MRVTQGCFSFLPDLSDEQIKLQVGYAMSKGWAVSVEWTDDPHPRNSYWELWGLPLFDVKDPAAVMYELAECRKVNPEGYIKINAFDASIGTESCVMSFIVQRPINEPGFYLERNEVQGRNIQYTISSYAVQARPSGDRY</sequence>
<dbReference type="EMBL" id="X55372">
    <property type="protein sequence ID" value="CAA39052.1"/>
    <property type="molecule type" value="Genomic_DNA"/>
</dbReference>
<dbReference type="PIR" id="S17764">
    <property type="entry name" value="RKPFSL"/>
</dbReference>
<dbReference type="SMR" id="P23652"/>
<dbReference type="GO" id="GO:0009507">
    <property type="term" value="C:chloroplast"/>
    <property type="evidence" value="ECO:0007669"/>
    <property type="project" value="UniProtKB-SubCell"/>
</dbReference>
<dbReference type="GO" id="GO:0016984">
    <property type="term" value="F:ribulose-bisphosphate carboxylase activity"/>
    <property type="evidence" value="ECO:0007669"/>
    <property type="project" value="UniProtKB-UniRule"/>
</dbReference>
<dbReference type="GO" id="GO:0019253">
    <property type="term" value="P:reductive pentose-phosphate cycle"/>
    <property type="evidence" value="ECO:0007669"/>
    <property type="project" value="UniProtKB-UniRule"/>
</dbReference>
<dbReference type="CDD" id="cd03527">
    <property type="entry name" value="RuBisCO_small"/>
    <property type="match status" value="1"/>
</dbReference>
<dbReference type="Gene3D" id="3.30.190.10">
    <property type="entry name" value="Ribulose bisphosphate carboxylase, small subunit"/>
    <property type="match status" value="1"/>
</dbReference>
<dbReference type="HAMAP" id="MF_00859">
    <property type="entry name" value="RuBisCO_S_bact"/>
    <property type="match status" value="1"/>
</dbReference>
<dbReference type="InterPro" id="IPR024681">
    <property type="entry name" value="RuBisCO_ssu"/>
</dbReference>
<dbReference type="InterPro" id="IPR000894">
    <property type="entry name" value="RuBisCO_ssu_dom"/>
</dbReference>
<dbReference type="InterPro" id="IPR036385">
    <property type="entry name" value="RuBisCO_ssu_sf"/>
</dbReference>
<dbReference type="PANTHER" id="PTHR31262">
    <property type="entry name" value="RIBULOSE BISPHOSPHATE CARBOXYLASE SMALL CHAIN 1, CHLOROPLASTIC"/>
    <property type="match status" value="1"/>
</dbReference>
<dbReference type="PANTHER" id="PTHR31262:SF23">
    <property type="entry name" value="RIBULOSE BISPHOSPHATE CARBOXYLASE SMALL SUBUNIT"/>
    <property type="match status" value="1"/>
</dbReference>
<dbReference type="Pfam" id="PF00101">
    <property type="entry name" value="RuBisCO_small"/>
    <property type="match status" value="1"/>
</dbReference>
<dbReference type="SMART" id="SM00961">
    <property type="entry name" value="RuBisCO_small"/>
    <property type="match status" value="1"/>
</dbReference>
<dbReference type="SUPFAM" id="SSF55239">
    <property type="entry name" value="RuBisCO, small subunit"/>
    <property type="match status" value="1"/>
</dbReference>
<evidence type="ECO:0000255" key="1">
    <source>
        <dbReference type="HAMAP-Rule" id="MF_00859"/>
    </source>
</evidence>
<feature type="chain" id="PRO_0000198605" description="Ribulose bisphosphate carboxylase small subunit">
    <location>
        <begin position="1"/>
        <end position="139"/>
    </location>
</feature>
<comment type="function">
    <text evidence="1">RuBisCO catalyzes two reactions: the carboxylation of D-ribulose 1,5-bisphosphate, the primary event in carbon dioxide fixation, as well as the oxidative fragmentation of the pentose substrate in the photorespiration process. Both reactions occur simultaneously and in competition at the same active site. Although the small subunit is not catalytic it is essential for maximal activity.</text>
</comment>
<comment type="subunit">
    <text evidence="1">Heterohexadecamer of 8 large and 8 small subunits.</text>
</comment>
<comment type="subcellular location">
    <subcellularLocation>
        <location evidence="1">Plastid</location>
        <location evidence="1">Chloroplast</location>
    </subcellularLocation>
</comment>
<comment type="miscellaneous">
    <text>In this alga, in contrast to plants, the small subunit is encoded in the chloroplast.</text>
</comment>
<comment type="miscellaneous">
    <text evidence="1">The basic functional RuBisCO is composed of a large chain homodimer in a 'head-to-tail' conformation. In form I RuBisCO this homodimer is arranged in a barrel-like tetramer with the small subunits forming a tetrameric 'cap' on each end of the 'barrel'.</text>
</comment>
<comment type="similarity">
    <text evidence="1">Belongs to the RuBisCO small chain family.</text>
</comment>